<name>PLPL7_RAT</name>
<comment type="function">
    <text evidence="1">Lysophospholipase which preferentially deacylates unsaturated lysophosphatidylcholine (C18:1), generating glycerophosphocholine. Also can deacylate, to a lesser extent, lysophosphatidylethanolamine (C18:1), lysophosphatidyl-L-serine (C18:1) and lysophosphatidic acid (C16:0).</text>
</comment>
<comment type="catalytic activity">
    <reaction evidence="1">
        <text>a 1-acyl-sn-glycero-3-phosphocholine + H2O = sn-glycerol 3-phosphocholine + a fatty acid + H(+)</text>
        <dbReference type="Rhea" id="RHEA:15177"/>
        <dbReference type="ChEBI" id="CHEBI:15377"/>
        <dbReference type="ChEBI" id="CHEBI:15378"/>
        <dbReference type="ChEBI" id="CHEBI:16870"/>
        <dbReference type="ChEBI" id="CHEBI:28868"/>
        <dbReference type="ChEBI" id="CHEBI:58168"/>
        <dbReference type="EC" id="3.1.1.5"/>
    </reaction>
    <physiologicalReaction direction="left-to-right" evidence="1">
        <dbReference type="Rhea" id="RHEA:15178"/>
    </physiologicalReaction>
</comment>
<comment type="catalytic activity">
    <reaction evidence="1">
        <text>1-(9Z-octadecenoyl)-sn-glycero-3-phosphocholine + H2O = sn-glycerol 3-phosphocholine + (9Z)-octadecenoate + H(+)</text>
        <dbReference type="Rhea" id="RHEA:40807"/>
        <dbReference type="ChEBI" id="CHEBI:15377"/>
        <dbReference type="ChEBI" id="CHEBI:15378"/>
        <dbReference type="ChEBI" id="CHEBI:16870"/>
        <dbReference type="ChEBI" id="CHEBI:28610"/>
        <dbReference type="ChEBI" id="CHEBI:30823"/>
    </reaction>
    <physiologicalReaction direction="left-to-right" evidence="1">
        <dbReference type="Rhea" id="RHEA:40808"/>
    </physiologicalReaction>
</comment>
<comment type="catalytic activity">
    <reaction evidence="1">
        <text>1-(9Z-octadecenoyl)-sn-glycero-3-phosphoethanolamine + H2O = sn-glycero-3-phosphoethanolamine + (9Z)-octadecenoate + H(+)</text>
        <dbReference type="Rhea" id="RHEA:40895"/>
        <dbReference type="ChEBI" id="CHEBI:15377"/>
        <dbReference type="ChEBI" id="CHEBI:15378"/>
        <dbReference type="ChEBI" id="CHEBI:30823"/>
        <dbReference type="ChEBI" id="CHEBI:74971"/>
        <dbReference type="ChEBI" id="CHEBI:143890"/>
    </reaction>
    <physiologicalReaction direction="left-to-right" evidence="1">
        <dbReference type="Rhea" id="RHEA:40896"/>
    </physiologicalReaction>
</comment>
<comment type="catalytic activity">
    <reaction evidence="1">
        <text>1-(9Z-octadecenoyl)-sn-glycero-3-phospho-L-serine + H2O = sn-glycero-3-phospho-L-serine + (9Z)-octadecenoate + H(+)</text>
        <dbReference type="Rhea" id="RHEA:40499"/>
        <dbReference type="ChEBI" id="CHEBI:15377"/>
        <dbReference type="ChEBI" id="CHEBI:15378"/>
        <dbReference type="ChEBI" id="CHEBI:30823"/>
        <dbReference type="ChEBI" id="CHEBI:64765"/>
        <dbReference type="ChEBI" id="CHEBI:74617"/>
    </reaction>
    <physiologicalReaction direction="left-to-right" evidence="1">
        <dbReference type="Rhea" id="RHEA:40500"/>
    </physiologicalReaction>
</comment>
<comment type="catalytic activity">
    <reaction evidence="1">
        <text>1-hexadecanoyl-sn-glycero-3-phosphocholine + H2O = sn-glycerol 3-phosphocholine + hexadecanoate + H(+)</text>
        <dbReference type="Rhea" id="RHEA:40435"/>
        <dbReference type="ChEBI" id="CHEBI:7896"/>
        <dbReference type="ChEBI" id="CHEBI:15377"/>
        <dbReference type="ChEBI" id="CHEBI:15378"/>
        <dbReference type="ChEBI" id="CHEBI:16870"/>
        <dbReference type="ChEBI" id="CHEBI:72998"/>
    </reaction>
    <physiologicalReaction direction="left-to-right" evidence="1">
        <dbReference type="Rhea" id="RHEA:40436"/>
    </physiologicalReaction>
</comment>
<comment type="catalytic activity">
    <reaction evidence="1">
        <text>1-hexadecanoyl-sn-glycero-3-phosphate + H2O = sn-glycerol 3-phosphate + hexadecanoate + H(+)</text>
        <dbReference type="Rhea" id="RHEA:49092"/>
        <dbReference type="ChEBI" id="CHEBI:7896"/>
        <dbReference type="ChEBI" id="CHEBI:15377"/>
        <dbReference type="ChEBI" id="CHEBI:15378"/>
        <dbReference type="ChEBI" id="CHEBI:57518"/>
        <dbReference type="ChEBI" id="CHEBI:57597"/>
    </reaction>
    <physiologicalReaction direction="left-to-right" evidence="1">
        <dbReference type="Rhea" id="RHEA:49093"/>
    </physiologicalReaction>
</comment>
<comment type="subcellular location">
    <subcellularLocation>
        <location evidence="1">Endoplasmic reticulum membrane</location>
        <topology evidence="1">Single-pass type III membrane protein</topology>
    </subcellularLocation>
    <subcellularLocation>
        <location evidence="1">Lipid droplet</location>
    </subcellularLocation>
</comment>
<comment type="tissue specificity">
    <text evidence="7">Expressed in the brain, liver, kidney, lung and testis.</text>
</comment>
<comment type="domain">
    <text evidence="1">The 3 cNMP binding domains are required for localization to the endoplasmic reticulum. The cNMP binding domain 3 is involved in the binding to lipid droplets.</text>
</comment>
<comment type="similarity">
    <text evidence="8">Belongs to the NTE family.</text>
</comment>
<comment type="caution">
    <text evidence="8">It is uncertain whether Met-1 or Met-27 is the initiator.</text>
</comment>
<comment type="sequence caution" evidence="8">
    <conflict type="erroneous initiation">
        <sequence resource="EMBL-CDS" id="AAH91230"/>
    </conflict>
</comment>
<dbReference type="EC" id="3.1.1.-" evidence="7"/>
<dbReference type="EC" id="3.1.1.5" evidence="1"/>
<dbReference type="EMBL" id="BC083547">
    <property type="protein sequence ID" value="AAH83547.2"/>
    <property type="molecule type" value="mRNA"/>
</dbReference>
<dbReference type="EMBL" id="BC091230">
    <property type="protein sequence ID" value="AAH91230.1"/>
    <property type="status" value="ALT_INIT"/>
    <property type="molecule type" value="mRNA"/>
</dbReference>
<dbReference type="EMBL" id="AY100477">
    <property type="protein sequence ID" value="AAM44077.1"/>
    <property type="molecule type" value="mRNA"/>
</dbReference>
<dbReference type="RefSeq" id="NP_653339.2">
    <property type="nucleotide sequence ID" value="NM_144738.2"/>
</dbReference>
<dbReference type="SMR" id="Q5BK26"/>
<dbReference type="FunCoup" id="Q5BK26">
    <property type="interactions" value="528"/>
</dbReference>
<dbReference type="STRING" id="10116.ENSRNOP00000011633"/>
<dbReference type="iPTMnet" id="Q5BK26"/>
<dbReference type="PhosphoSitePlus" id="Q5BK26"/>
<dbReference type="jPOST" id="Q5BK26"/>
<dbReference type="PaxDb" id="10116-ENSRNOP00000011633"/>
<dbReference type="GeneID" id="246246"/>
<dbReference type="KEGG" id="rno:246246"/>
<dbReference type="UCSC" id="RGD:708466">
    <property type="organism name" value="rat"/>
</dbReference>
<dbReference type="AGR" id="RGD:708466"/>
<dbReference type="CTD" id="375775"/>
<dbReference type="RGD" id="708466">
    <property type="gene designation" value="Pnpla7"/>
</dbReference>
<dbReference type="eggNOG" id="KOG2968">
    <property type="taxonomic scope" value="Eukaryota"/>
</dbReference>
<dbReference type="InParanoid" id="Q5BK26"/>
<dbReference type="OrthoDB" id="43439at9989"/>
<dbReference type="PhylomeDB" id="Q5BK26"/>
<dbReference type="PRO" id="PR:Q5BK26"/>
<dbReference type="Proteomes" id="UP000002494">
    <property type="component" value="Unplaced"/>
</dbReference>
<dbReference type="GO" id="GO:0005783">
    <property type="term" value="C:endoplasmic reticulum"/>
    <property type="evidence" value="ECO:0000266"/>
    <property type="project" value="RGD"/>
</dbReference>
<dbReference type="GO" id="GO:0005789">
    <property type="term" value="C:endoplasmic reticulum membrane"/>
    <property type="evidence" value="ECO:0000250"/>
    <property type="project" value="UniProtKB"/>
</dbReference>
<dbReference type="GO" id="GO:0005811">
    <property type="term" value="C:lipid droplet"/>
    <property type="evidence" value="ECO:0000250"/>
    <property type="project" value="UniProtKB"/>
</dbReference>
<dbReference type="GO" id="GO:0004622">
    <property type="term" value="F:lysophospholipase activity"/>
    <property type="evidence" value="ECO:0000250"/>
    <property type="project" value="UniProtKB"/>
</dbReference>
<dbReference type="GO" id="GO:0034638">
    <property type="term" value="P:phosphatidylcholine catabolic process"/>
    <property type="evidence" value="ECO:0000250"/>
    <property type="project" value="UniProtKB"/>
</dbReference>
<dbReference type="CDD" id="cd00038">
    <property type="entry name" value="CAP_ED"/>
    <property type="match status" value="3"/>
</dbReference>
<dbReference type="CDD" id="cd07225">
    <property type="entry name" value="Pat_PNPLA6_PNPLA7"/>
    <property type="match status" value="1"/>
</dbReference>
<dbReference type="FunFam" id="2.60.120.10:FF:000010">
    <property type="entry name" value="neuropathy target esterase isoform X1"/>
    <property type="match status" value="1"/>
</dbReference>
<dbReference type="FunFam" id="2.60.120.10:FF:000012">
    <property type="entry name" value="neuropathy target esterase isoform X2"/>
    <property type="match status" value="1"/>
</dbReference>
<dbReference type="FunFam" id="3.40.1090.10:FF:000001">
    <property type="entry name" value="neuropathy target esterase isoform X2"/>
    <property type="match status" value="1"/>
</dbReference>
<dbReference type="FunFam" id="2.60.120.10:FF:000022">
    <property type="entry name" value="Patatin like phospholipase domain containing 7"/>
    <property type="match status" value="1"/>
</dbReference>
<dbReference type="Gene3D" id="3.40.1090.10">
    <property type="entry name" value="Cytosolic phospholipase A2 catalytic domain"/>
    <property type="match status" value="1"/>
</dbReference>
<dbReference type="Gene3D" id="2.60.120.10">
    <property type="entry name" value="Jelly Rolls"/>
    <property type="match status" value="3"/>
</dbReference>
<dbReference type="InterPro" id="IPR016035">
    <property type="entry name" value="Acyl_Trfase/lysoPLipase"/>
</dbReference>
<dbReference type="InterPro" id="IPR000595">
    <property type="entry name" value="cNMP-bd_dom"/>
</dbReference>
<dbReference type="InterPro" id="IPR018490">
    <property type="entry name" value="cNMP-bd_dom_sf"/>
</dbReference>
<dbReference type="InterPro" id="IPR050301">
    <property type="entry name" value="NTE"/>
</dbReference>
<dbReference type="InterPro" id="IPR056556">
    <property type="entry name" value="NTE1_P-loop_dom"/>
</dbReference>
<dbReference type="InterPro" id="IPR002641">
    <property type="entry name" value="PNPLA_dom"/>
</dbReference>
<dbReference type="InterPro" id="IPR014710">
    <property type="entry name" value="RmlC-like_jellyroll"/>
</dbReference>
<dbReference type="PANTHER" id="PTHR14226">
    <property type="entry name" value="NEUROPATHY TARGET ESTERASE/SWISS CHEESE D.MELANOGASTER"/>
    <property type="match status" value="1"/>
</dbReference>
<dbReference type="PANTHER" id="PTHR14226:SF23">
    <property type="entry name" value="PATATIN-LIKE PHOSPHOLIPASE DOMAIN-CONTAINING PROTEIN 7"/>
    <property type="match status" value="1"/>
</dbReference>
<dbReference type="Pfam" id="PF00027">
    <property type="entry name" value="cNMP_binding"/>
    <property type="match status" value="3"/>
</dbReference>
<dbReference type="Pfam" id="PF24179">
    <property type="entry name" value="NTE_Ploop"/>
    <property type="match status" value="1"/>
</dbReference>
<dbReference type="Pfam" id="PF01734">
    <property type="entry name" value="Patatin"/>
    <property type="match status" value="1"/>
</dbReference>
<dbReference type="SMART" id="SM00100">
    <property type="entry name" value="cNMP"/>
    <property type="match status" value="3"/>
</dbReference>
<dbReference type="SUPFAM" id="SSF51206">
    <property type="entry name" value="cAMP-binding domain-like"/>
    <property type="match status" value="3"/>
</dbReference>
<dbReference type="SUPFAM" id="SSF52151">
    <property type="entry name" value="FabD/lysophospholipase-like"/>
    <property type="match status" value="1"/>
</dbReference>
<dbReference type="PROSITE" id="PS50042">
    <property type="entry name" value="CNMP_BINDING_3"/>
    <property type="match status" value="3"/>
</dbReference>
<dbReference type="PROSITE" id="PS51635">
    <property type="entry name" value="PNPLA"/>
    <property type="match status" value="1"/>
</dbReference>
<evidence type="ECO:0000250" key="1">
    <source>
        <dbReference type="UniProtKB" id="A2AJ88"/>
    </source>
</evidence>
<evidence type="ECO:0000250" key="2">
    <source>
        <dbReference type="UniProtKB" id="Q6ZV29"/>
    </source>
</evidence>
<evidence type="ECO:0000255" key="3"/>
<evidence type="ECO:0000255" key="4">
    <source>
        <dbReference type="PROSITE-ProRule" id="PRU00060"/>
    </source>
</evidence>
<evidence type="ECO:0000255" key="5">
    <source>
        <dbReference type="PROSITE-ProRule" id="PRU01161"/>
    </source>
</evidence>
<evidence type="ECO:0000256" key="6">
    <source>
        <dbReference type="SAM" id="MobiDB-lite"/>
    </source>
</evidence>
<evidence type="ECO:0000269" key="7">
    <source>
    </source>
</evidence>
<evidence type="ECO:0000305" key="8"/>
<evidence type="ECO:0007744" key="9">
    <source>
    </source>
</evidence>
<organism>
    <name type="scientific">Rattus norvegicus</name>
    <name type="common">Rat</name>
    <dbReference type="NCBI Taxonomy" id="10116"/>
    <lineage>
        <taxon>Eukaryota</taxon>
        <taxon>Metazoa</taxon>
        <taxon>Chordata</taxon>
        <taxon>Craniata</taxon>
        <taxon>Vertebrata</taxon>
        <taxon>Euteleostomi</taxon>
        <taxon>Mammalia</taxon>
        <taxon>Eutheria</taxon>
        <taxon>Euarchontoglires</taxon>
        <taxon>Glires</taxon>
        <taxon>Rodentia</taxon>
        <taxon>Myomorpha</taxon>
        <taxon>Muroidea</taxon>
        <taxon>Muridae</taxon>
        <taxon>Murinae</taxon>
        <taxon>Rattus</taxon>
    </lineage>
</organism>
<proteinExistence type="evidence at protein level"/>
<protein>
    <recommendedName>
        <fullName>Patatin-like phospholipase domain-containing protein 7</fullName>
        <ecNumber evidence="7">3.1.1.-</ecNumber>
        <ecNumber evidence="1">3.1.1.5</ecNumber>
    </recommendedName>
    <alternativeName>
        <fullName>Liver NTE-related protein 1</fullName>
    </alternativeName>
    <alternativeName>
        <fullName>NTE-related esterase</fullName>
    </alternativeName>
</protein>
<accession>Q5BK26</accession>
<accession>Q5XIX2</accession>
<accession>Q8K3H9</accession>
<feature type="chain" id="PRO_0000293491" description="Patatin-like phospholipase domain-containing protein 7">
    <location>
        <begin position="1"/>
        <end position="1349"/>
    </location>
</feature>
<feature type="topological domain" description="Lumenal" evidence="8">
    <location>
        <begin position="1"/>
        <end position="36"/>
    </location>
</feature>
<feature type="transmembrane region" description="Helical" evidence="3">
    <location>
        <begin position="37"/>
        <end position="57"/>
    </location>
</feature>
<feature type="topological domain" description="Cytoplasmic" evidence="8">
    <location>
        <begin position="58"/>
        <end position="1349"/>
    </location>
</feature>
<feature type="domain" description="PNPLA" evidence="5">
    <location>
        <begin position="947"/>
        <end position="1113"/>
    </location>
</feature>
<feature type="region of interest" description="Disordered" evidence="6">
    <location>
        <begin position="340"/>
        <end position="361"/>
    </location>
</feature>
<feature type="region of interest" description="Involved in the binding to lipid droplets" evidence="1">
    <location>
        <begin position="678"/>
        <end position="964"/>
    </location>
</feature>
<feature type="region of interest" description="Disordered" evidence="6">
    <location>
        <begin position="1297"/>
        <end position="1349"/>
    </location>
</feature>
<feature type="short sequence motif" description="GXGXXG" evidence="5">
    <location>
        <begin position="951"/>
        <end position="956"/>
    </location>
</feature>
<feature type="short sequence motif" description="GXSXG" evidence="5">
    <location>
        <begin position="978"/>
        <end position="982"/>
    </location>
</feature>
<feature type="short sequence motif" description="DGA/G" evidence="5">
    <location>
        <begin position="1100"/>
        <end position="1102"/>
    </location>
</feature>
<feature type="compositionally biased region" description="Polar residues" evidence="6">
    <location>
        <begin position="1314"/>
        <end position="1331"/>
    </location>
</feature>
<feature type="active site" description="Nucleophile" evidence="5">
    <location>
        <position position="980"/>
    </location>
</feature>
<feature type="active site" description="Proton acceptor" evidence="5">
    <location>
        <position position="1100"/>
    </location>
</feature>
<feature type="binding site" evidence="4">
    <location>
        <begin position="170"/>
        <end position="297"/>
    </location>
    <ligand>
        <name>a nucleoside 3',5'-cyclic phosphate</name>
        <dbReference type="ChEBI" id="CHEBI:58464"/>
        <label>1</label>
    </ligand>
</feature>
<feature type="binding site" evidence="4">
    <location>
        <begin position="496"/>
        <end position="599"/>
    </location>
    <ligand>
        <name>a nucleoside 3',5'-cyclic phosphate</name>
        <dbReference type="ChEBI" id="CHEBI:58464"/>
        <label>2</label>
    </ligand>
</feature>
<feature type="binding site" evidence="4">
    <location>
        <begin position="610"/>
        <end position="715"/>
    </location>
    <ligand>
        <name>a nucleoside 3',5'-cyclic phosphate</name>
        <dbReference type="ChEBI" id="CHEBI:58464"/>
        <label>3</label>
    </ligand>
</feature>
<feature type="modified residue" description="Phosphoserine" evidence="9">
    <location>
        <position position="341"/>
    </location>
</feature>
<feature type="modified residue" description="Phosphoserine" evidence="2">
    <location>
        <position position="377"/>
    </location>
</feature>
<feature type="modified residue" description="Phosphoserine" evidence="9">
    <location>
        <position position="1277"/>
    </location>
</feature>
<feature type="modified residue" description="Phosphothreonine" evidence="9">
    <location>
        <position position="1281"/>
    </location>
</feature>
<feature type="mutagenesis site" description="Abolishes hydrolytic activity." evidence="7">
    <original>S</original>
    <variation>A</variation>
    <variation>C</variation>
    <variation>D</variation>
    <variation>H</variation>
    <location>
        <position position="980"/>
    </location>
</feature>
<feature type="sequence conflict" description="In Ref. 1; AAH91230." evidence="8" ref="1">
    <original>GC</original>
    <variation>CT</variation>
    <location>
        <begin position="956"/>
        <end position="957"/>
    </location>
</feature>
<feature type="sequence conflict" description="In Ref. 1; AAH83547." evidence="8" ref="1">
    <original>A</original>
    <variation>S</variation>
    <location>
        <position position="1071"/>
    </location>
</feature>
<feature type="sequence conflict" description="In Ref. 1; AAH83547." evidence="8" ref="1">
    <original>PAG</original>
    <variation>RTV</variation>
    <location>
        <begin position="1217"/>
        <end position="1219"/>
    </location>
</feature>
<sequence>MQKEEDVCPEAGYCLGTALSSWGLHFMEEHSQSTMLMGIGIGVLLTLAFVGLAAFFVYRKVSRFRRAEPIPQYRFRKRDKVMFYGRKIMRKVTTLPHTLVGNTAAPRQRVRKRTKVLSLAKRILRFKKEYPTLQPKEPPPSLLEADLTEFDVKNSHLPSEVLYMLKNVRVLGHFEKPLFLELCKHMVFVQLQEGEHVFQPGEPDISIYVVQDGRLEVCIQDADGTEVVVKEVLPGDSVHSLLSILDVITGHTAPYKTVSARAAVASTVLWLPAAAFQGVFEKYPETLVRVVQIIMVRLQRVTFLALHNYLGLTTELFNPESQAIPLLSVASVAGRAKRQMSYGPEEQLERSPRLSEFNSSDQRSVAVSGPLLKRSCSVPLPPIHGEIDELRQAQGSGSNTSAFQESQEGATSDLGMAYNRARILPHSEEQLGSSLASKSKKSVVAETSAVFHYSEKPRDEPGPSGRTDAIFRAATKDLLTLMKLDDPSLLDGRVAFLHVPAGTIVSKQGDQDVNILFVVSGMLHVYQQKIDSLEDTCLFLTHPGEMVGQLAVLTGEPLMFTIRANRDCSFLSISKAHFYEIMRKRPDVVLGVAHTVVRRMSSFVRQIDFALDWMEVEAGRAIYRQGDKSDCTYIVLSGRLRSVIRKDDGKKRLAGEYGRGDLVGVVEMLTHQARATTVHAVRDSELAKLPAGALTSIKRRYPQVVTRLIHLLGEKILGSLQQGSGTGHQLGFNTASSKWDLGNPPGNLSTVAAMPVSEDVPLTAFALELQHALSAIGPVLLLTSDNIKQRLGSAALDSIHEYRLSSWLGQQEDIHRIVLYQADSTLTPWTQRCIRQADCILIVGLGDQEPALGELEQMLESTAVRAQKQLILLHKEEGPAPSRTVEWLNMRSWCSGHLHLCCPRRVFSKRSLPKLVEMYTRIFQRPPDRHSDFSRLARILTGNAIALVLGGGGARGCAQVGILRALAECGIPVDIIGGTSIGAFMGALFAEERSYSQIRIRAKQWAEDMTSMVKTILDLTYPITSMFSGTGFNSSISNIFKDRQIEDLWLPYFAITTDITASAMRVHTDGALWRYVRASMSLSGYMPPLCDPKDGHLLMDGGYINNLPADVARSMGAKVVIAIDVGSRDETDLTNYGDALSGWWLLWKRWNPLATKVKVLNMAEIQTRLAYVCCVRQLEMVKNSDYCEYLRPPIDSYRTLDFGKFDEICEVGYQHGPAGFDIWVRSGVLEKMLQDQQGTSKRMDCGVFTCPNSSFTDLAEIVSRIEPAKVAAVDDESDYQTEYEEELPAIPKETYADFQSTGIELDSDSECEPSMSQGPHSLTSPKQSQDSFPWLPNQDDQGPRLYRPS</sequence>
<gene>
    <name type="primary">Pnpla7</name>
    <name type="synonym">Nre</name>
    <name type="synonym">Ntel1</name>
</gene>
<keyword id="KW-0256">Endoplasmic reticulum</keyword>
<keyword id="KW-0378">Hydrolase</keyword>
<keyword id="KW-0442">Lipid degradation</keyword>
<keyword id="KW-0551">Lipid droplet</keyword>
<keyword id="KW-0443">Lipid metabolism</keyword>
<keyword id="KW-0472">Membrane</keyword>
<keyword id="KW-0597">Phosphoprotein</keyword>
<keyword id="KW-1185">Reference proteome</keyword>
<keyword id="KW-0677">Repeat</keyword>
<keyword id="KW-0812">Transmembrane</keyword>
<keyword id="KW-1133">Transmembrane helix</keyword>
<reference key="1">
    <citation type="journal article" date="2004" name="Genome Res.">
        <title>The status, quality, and expansion of the NIH full-length cDNA project: the Mammalian Gene Collection (MGC).</title>
        <authorList>
            <consortium name="The MGC Project Team"/>
        </authorList>
    </citation>
    <scope>NUCLEOTIDE SEQUENCE [LARGE SCALE MRNA]</scope>
    <source>
        <tissue>Liver</tissue>
        <tissue>Testis</tissue>
    </source>
</reference>
<reference key="2">
    <citation type="journal article" date="2003" name="Arch. Biochem. Biophys.">
        <title>Rat NTE-related esterase is a membrane-associated protein, hydrolyzes phenyl valerate, and interacts with diisopropylfluorophosphate through a serine catalytic machinery.</title>
        <authorList>
            <person name="Xie M."/>
            <person name="Yang D."/>
            <person name="Matoney L."/>
            <person name="Yan B."/>
        </authorList>
    </citation>
    <scope>NUCLEOTIDE SEQUENCE [MRNA] OF 668-1349</scope>
    <scope>CATALYTIC ACTIVITY</scope>
    <scope>TISSUE SPECIFICITY</scope>
    <scope>MUTAGENESIS OF SER-980</scope>
    <source>
        <tissue>Brain</tissue>
        <tissue>Liver</tissue>
    </source>
</reference>
<reference key="3">
    <citation type="journal article" date="2012" name="Nat. Commun.">
        <title>Quantitative maps of protein phosphorylation sites across 14 different rat organs and tissues.</title>
        <authorList>
            <person name="Lundby A."/>
            <person name="Secher A."/>
            <person name="Lage K."/>
            <person name="Nordsborg N.B."/>
            <person name="Dmytriyev A."/>
            <person name="Lundby C."/>
            <person name="Olsen J.V."/>
        </authorList>
    </citation>
    <scope>PHOSPHORYLATION [LARGE SCALE ANALYSIS] AT SER-341; SER-1277 AND THR-1281</scope>
    <scope>IDENTIFICATION BY MASS SPECTROMETRY [LARGE SCALE ANALYSIS]</scope>
</reference>